<comment type="similarity">
    <text evidence="1">Belongs to the UPF0509 family.</text>
</comment>
<protein>
    <recommendedName>
        <fullName evidence="1">UPF0509 protein ESA_01586</fullName>
    </recommendedName>
</protein>
<dbReference type="EMBL" id="CP000783">
    <property type="protein sequence ID" value="ABU76840.1"/>
    <property type="molecule type" value="Genomic_DNA"/>
</dbReference>
<dbReference type="RefSeq" id="WP_004386706.1">
    <property type="nucleotide sequence ID" value="NC_009778.1"/>
</dbReference>
<dbReference type="SMR" id="A7MMF2"/>
<dbReference type="KEGG" id="esa:ESA_01586"/>
<dbReference type="HOGENOM" id="CLU_180697_1_0_6"/>
<dbReference type="Proteomes" id="UP000000260">
    <property type="component" value="Chromosome"/>
</dbReference>
<dbReference type="HAMAP" id="MF_01641">
    <property type="entry name" value="UPF0509"/>
    <property type="match status" value="1"/>
</dbReference>
<dbReference type="InterPro" id="IPR020887">
    <property type="entry name" value="UPF0509"/>
</dbReference>
<dbReference type="NCBIfam" id="NF010179">
    <property type="entry name" value="PRK13658.1"/>
    <property type="match status" value="1"/>
</dbReference>
<dbReference type="Pfam" id="PF23675">
    <property type="entry name" value="YciZ"/>
    <property type="match status" value="1"/>
</dbReference>
<reference key="1">
    <citation type="journal article" date="2010" name="PLoS ONE">
        <title>Genome sequence of Cronobacter sakazakii BAA-894 and comparative genomic hybridization analysis with other Cronobacter species.</title>
        <authorList>
            <person name="Kucerova E."/>
            <person name="Clifton S.W."/>
            <person name="Xia X.Q."/>
            <person name="Long F."/>
            <person name="Porwollik S."/>
            <person name="Fulton L."/>
            <person name="Fronick C."/>
            <person name="Minx P."/>
            <person name="Kyung K."/>
            <person name="Warren W."/>
            <person name="Fulton R."/>
            <person name="Feng D."/>
            <person name="Wollam A."/>
            <person name="Shah N."/>
            <person name="Bhonagiri V."/>
            <person name="Nash W.E."/>
            <person name="Hallsworth-Pepin K."/>
            <person name="Wilson R.K."/>
            <person name="McClelland M."/>
            <person name="Forsythe S.J."/>
        </authorList>
    </citation>
    <scope>NUCLEOTIDE SEQUENCE [LARGE SCALE GENOMIC DNA]</scope>
    <source>
        <strain>ATCC BAA-894</strain>
    </source>
</reference>
<name>Y1586_CROS8</name>
<evidence type="ECO:0000255" key="1">
    <source>
        <dbReference type="HAMAP-Rule" id="MF_01641"/>
    </source>
</evidence>
<keyword id="KW-1185">Reference proteome</keyword>
<organism>
    <name type="scientific">Cronobacter sakazakii (strain ATCC BAA-894)</name>
    <name type="common">Enterobacter sakazakii</name>
    <dbReference type="NCBI Taxonomy" id="290339"/>
    <lineage>
        <taxon>Bacteria</taxon>
        <taxon>Pseudomonadati</taxon>
        <taxon>Pseudomonadota</taxon>
        <taxon>Gammaproteobacteria</taxon>
        <taxon>Enterobacterales</taxon>
        <taxon>Enterobacteriaceae</taxon>
        <taxon>Cronobacter</taxon>
    </lineage>
</organism>
<gene>
    <name type="ordered locus">ESA_01586</name>
</gene>
<accession>A7MMF2</accession>
<proteinExistence type="inferred from homology"/>
<sequence length="60" mass="6735">MPTVNPQQLADRIDTVLDILVAGDYHSAIHNLEILKAELLAQSQQNDEPGEKKQKAPWEI</sequence>
<feature type="chain" id="PRO_0000312524" description="UPF0509 protein ESA_01586">
    <location>
        <begin position="1"/>
        <end position="60"/>
    </location>
</feature>